<gene>
    <name evidence="1" type="primary">acpS</name>
    <name type="ordered locus">MGAS10750_Spy1592</name>
</gene>
<reference key="1">
    <citation type="journal article" date="2006" name="Proc. Natl. Acad. Sci. U.S.A.">
        <title>Molecular genetic anatomy of inter- and intraserotype variation in the human bacterial pathogen group A Streptococcus.</title>
        <authorList>
            <person name="Beres S.B."/>
            <person name="Richter E.W."/>
            <person name="Nagiec M.J."/>
            <person name="Sumby P."/>
            <person name="Porcella S.F."/>
            <person name="DeLeo F.R."/>
            <person name="Musser J.M."/>
        </authorList>
    </citation>
    <scope>NUCLEOTIDE SEQUENCE [LARGE SCALE GENOMIC DNA]</scope>
    <source>
        <strain>MGAS10750</strain>
    </source>
</reference>
<proteinExistence type="inferred from homology"/>
<sequence>MIVGHGIDLQEISAIEKVYQRNPRFAQKILTEQELAIFESFPYKRRLSYLAGRWSGKEAFAKAIGTGIGRLTFQDIEILNDVRGCPILTKSPFKGNSFISISHSGNYVQASVILEDKK</sequence>
<organism>
    <name type="scientific">Streptococcus pyogenes serotype M4 (strain MGAS10750)</name>
    <dbReference type="NCBI Taxonomy" id="370554"/>
    <lineage>
        <taxon>Bacteria</taxon>
        <taxon>Bacillati</taxon>
        <taxon>Bacillota</taxon>
        <taxon>Bacilli</taxon>
        <taxon>Lactobacillales</taxon>
        <taxon>Streptococcaceae</taxon>
        <taxon>Streptococcus</taxon>
    </lineage>
</organism>
<dbReference type="EC" id="2.7.8.7" evidence="1"/>
<dbReference type="EMBL" id="CP000262">
    <property type="protein sequence ID" value="ABF38542.1"/>
    <property type="molecule type" value="Genomic_DNA"/>
</dbReference>
<dbReference type="SMR" id="Q1J544"/>
<dbReference type="KEGG" id="spi:MGAS10750_Spy1592"/>
<dbReference type="HOGENOM" id="CLU_089696_1_2_9"/>
<dbReference type="Proteomes" id="UP000002434">
    <property type="component" value="Chromosome"/>
</dbReference>
<dbReference type="GO" id="GO:0005737">
    <property type="term" value="C:cytoplasm"/>
    <property type="evidence" value="ECO:0007669"/>
    <property type="project" value="UniProtKB-SubCell"/>
</dbReference>
<dbReference type="GO" id="GO:0008897">
    <property type="term" value="F:holo-[acyl-carrier-protein] synthase activity"/>
    <property type="evidence" value="ECO:0007669"/>
    <property type="project" value="UniProtKB-UniRule"/>
</dbReference>
<dbReference type="GO" id="GO:0000287">
    <property type="term" value="F:magnesium ion binding"/>
    <property type="evidence" value="ECO:0007669"/>
    <property type="project" value="UniProtKB-UniRule"/>
</dbReference>
<dbReference type="GO" id="GO:0006633">
    <property type="term" value="P:fatty acid biosynthetic process"/>
    <property type="evidence" value="ECO:0007669"/>
    <property type="project" value="UniProtKB-UniRule"/>
</dbReference>
<dbReference type="Gene3D" id="3.90.470.20">
    <property type="entry name" value="4'-phosphopantetheinyl transferase domain"/>
    <property type="match status" value="1"/>
</dbReference>
<dbReference type="HAMAP" id="MF_00101">
    <property type="entry name" value="AcpS"/>
    <property type="match status" value="1"/>
</dbReference>
<dbReference type="InterPro" id="IPR008278">
    <property type="entry name" value="4-PPantetheinyl_Trfase_dom"/>
</dbReference>
<dbReference type="InterPro" id="IPR037143">
    <property type="entry name" value="4-PPantetheinyl_Trfase_dom_sf"/>
</dbReference>
<dbReference type="InterPro" id="IPR002582">
    <property type="entry name" value="ACPS"/>
</dbReference>
<dbReference type="InterPro" id="IPR004568">
    <property type="entry name" value="Ppantetheine-prot_Trfase_dom"/>
</dbReference>
<dbReference type="NCBIfam" id="TIGR00516">
    <property type="entry name" value="acpS"/>
    <property type="match status" value="1"/>
</dbReference>
<dbReference type="NCBIfam" id="TIGR00556">
    <property type="entry name" value="pantethn_trn"/>
    <property type="match status" value="1"/>
</dbReference>
<dbReference type="Pfam" id="PF01648">
    <property type="entry name" value="ACPS"/>
    <property type="match status" value="1"/>
</dbReference>
<dbReference type="SUPFAM" id="SSF56214">
    <property type="entry name" value="4'-phosphopantetheinyl transferase"/>
    <property type="match status" value="1"/>
</dbReference>
<protein>
    <recommendedName>
        <fullName evidence="1">Holo-[acyl-carrier-protein] synthase</fullName>
        <shortName evidence="1">Holo-ACP synthase</shortName>
        <ecNumber evidence="1">2.7.8.7</ecNumber>
    </recommendedName>
    <alternativeName>
        <fullName evidence="1">4'-phosphopantetheinyl transferase AcpS</fullName>
    </alternativeName>
</protein>
<keyword id="KW-0963">Cytoplasm</keyword>
<keyword id="KW-0275">Fatty acid biosynthesis</keyword>
<keyword id="KW-0276">Fatty acid metabolism</keyword>
<keyword id="KW-0444">Lipid biosynthesis</keyword>
<keyword id="KW-0443">Lipid metabolism</keyword>
<keyword id="KW-0460">Magnesium</keyword>
<keyword id="KW-0479">Metal-binding</keyword>
<keyword id="KW-0808">Transferase</keyword>
<evidence type="ECO:0000255" key="1">
    <source>
        <dbReference type="HAMAP-Rule" id="MF_00101"/>
    </source>
</evidence>
<accession>Q1J544</accession>
<name>ACPS_STRPF</name>
<feature type="chain" id="PRO_1000008513" description="Holo-[acyl-carrier-protein] synthase">
    <location>
        <begin position="1"/>
        <end position="118"/>
    </location>
</feature>
<feature type="binding site" evidence="1">
    <location>
        <position position="8"/>
    </location>
    <ligand>
        <name>Mg(2+)</name>
        <dbReference type="ChEBI" id="CHEBI:18420"/>
    </ligand>
</feature>
<feature type="binding site" evidence="1">
    <location>
        <position position="58"/>
    </location>
    <ligand>
        <name>Mg(2+)</name>
        <dbReference type="ChEBI" id="CHEBI:18420"/>
    </ligand>
</feature>
<comment type="function">
    <text evidence="1">Transfers the 4'-phosphopantetheine moiety from coenzyme A to a Ser of acyl-carrier-protein.</text>
</comment>
<comment type="catalytic activity">
    <reaction evidence="1">
        <text>apo-[ACP] + CoA = holo-[ACP] + adenosine 3',5'-bisphosphate + H(+)</text>
        <dbReference type="Rhea" id="RHEA:12068"/>
        <dbReference type="Rhea" id="RHEA-COMP:9685"/>
        <dbReference type="Rhea" id="RHEA-COMP:9690"/>
        <dbReference type="ChEBI" id="CHEBI:15378"/>
        <dbReference type="ChEBI" id="CHEBI:29999"/>
        <dbReference type="ChEBI" id="CHEBI:57287"/>
        <dbReference type="ChEBI" id="CHEBI:58343"/>
        <dbReference type="ChEBI" id="CHEBI:64479"/>
        <dbReference type="EC" id="2.7.8.7"/>
    </reaction>
</comment>
<comment type="cofactor">
    <cofactor evidence="1">
        <name>Mg(2+)</name>
        <dbReference type="ChEBI" id="CHEBI:18420"/>
    </cofactor>
</comment>
<comment type="subcellular location">
    <subcellularLocation>
        <location evidence="1">Cytoplasm</location>
    </subcellularLocation>
</comment>
<comment type="similarity">
    <text evidence="1">Belongs to the P-Pant transferase superfamily. AcpS family.</text>
</comment>